<evidence type="ECO:0000255" key="1"/>
<evidence type="ECO:0000255" key="2">
    <source>
        <dbReference type="PROSITE-ProRule" id="PRU00695"/>
    </source>
</evidence>
<evidence type="ECO:0000256" key="3">
    <source>
        <dbReference type="SAM" id="MobiDB-lite"/>
    </source>
</evidence>
<evidence type="ECO:0000269" key="4">
    <source>
    </source>
</evidence>
<evidence type="ECO:0000305" key="5"/>
<keyword id="KW-0025">Alternative splicing</keyword>
<keyword id="KW-0342">GTP-binding</keyword>
<keyword id="KW-0396">Initiation factor</keyword>
<keyword id="KW-0547">Nucleotide-binding</keyword>
<keyword id="KW-0648">Protein biosynthesis</keyword>
<keyword id="KW-1185">Reference proteome</keyword>
<gene>
    <name type="ORF">C37C3.2</name>
</gene>
<comment type="function">
    <text>Catalyzes the hydrolysis of GTP bound to the 40S ribosomal initiation complex (40S.mRNA.Met-tRNA[F].eIF-2.GTP) with the subsequent joining of a 60S ribosomal subunit resulting in the release of eIF-2 and the guanine nucleotide. The subsequent joining of a 60S ribosomal subunit results in the formation of a functional 80S initiation complex (80S.mRNA.Met-tRNA[F]).</text>
</comment>
<comment type="alternative products">
    <event type="alternative splicing"/>
    <isoform>
        <id>Q22918-1</id>
        <name>a</name>
        <sequence type="displayed"/>
    </isoform>
    <isoform>
        <id>Q22918-2</id>
        <name>b</name>
        <sequence type="described" ref="VSP_001438"/>
    </isoform>
</comment>
<comment type="disruption phenotype">
    <text evidence="4">RNAi-mediated knockdown results in a decrease in protein synthesis and an increase in the expression of gpdh-1 independent of hypertonic stress.</text>
</comment>
<comment type="similarity">
    <text evidence="5">Belongs to the eIF-2-beta/eIF-5 family.</text>
</comment>
<feature type="chain" id="PRO_0000212519" description="Eukaryotic translation initiation factor 5">
    <location>
        <begin position="1"/>
        <end position="436"/>
    </location>
</feature>
<feature type="domain" description="W2" evidence="2">
    <location>
        <begin position="216"/>
        <end position="379"/>
    </location>
</feature>
<feature type="region of interest" description="Disordered" evidence="3">
    <location>
        <begin position="177"/>
        <end position="203"/>
    </location>
</feature>
<feature type="region of interest" description="Disordered" evidence="3">
    <location>
        <begin position="396"/>
        <end position="436"/>
    </location>
</feature>
<feature type="compositionally biased region" description="Acidic residues" evidence="3">
    <location>
        <begin position="184"/>
        <end position="195"/>
    </location>
</feature>
<feature type="compositionally biased region" description="Basic and acidic residues" evidence="3">
    <location>
        <begin position="396"/>
        <end position="408"/>
    </location>
</feature>
<feature type="compositionally biased region" description="Low complexity" evidence="3">
    <location>
        <begin position="409"/>
        <end position="425"/>
    </location>
</feature>
<feature type="compositionally biased region" description="Acidic residues" evidence="3">
    <location>
        <begin position="426"/>
        <end position="436"/>
    </location>
</feature>
<feature type="binding site" evidence="1">
    <location>
        <begin position="27"/>
        <end position="34"/>
    </location>
    <ligand>
        <name>GTP</name>
        <dbReference type="ChEBI" id="CHEBI:37565"/>
    </ligand>
</feature>
<feature type="splice variant" id="VSP_001438" description="In isoform b." evidence="5">
    <location>
        <begin position="272"/>
        <end position="305"/>
    </location>
</feature>
<reference key="1">
    <citation type="journal article" date="1998" name="Science">
        <title>Genome sequence of the nematode C. elegans: a platform for investigating biology.</title>
        <authorList>
            <consortium name="The C. elegans sequencing consortium"/>
        </authorList>
    </citation>
    <scope>NUCLEOTIDE SEQUENCE [LARGE SCALE GENOMIC DNA]</scope>
    <scope>ALTERNATIVE SPLICING</scope>
    <source>
        <strain>Bristol N2</strain>
    </source>
</reference>
<reference key="2">
    <citation type="journal article" date="2012" name="Am. J. Physiol.">
        <title>GCN-2 dependent inhibition of protein synthesis activates osmosensitive gene transcription via WNK and Ste20 kinase signaling.</title>
        <authorList>
            <person name="Lee E.C."/>
            <person name="Strange K."/>
        </authorList>
    </citation>
    <scope>DISRUPTION PHENOTYPE</scope>
</reference>
<accession>Q22918</accession>
<accession>Q95Q70</accession>
<protein>
    <recommendedName>
        <fullName>Eukaryotic translation initiation factor 5</fullName>
        <shortName>eIF-5</shortName>
    </recommendedName>
</protein>
<dbReference type="EMBL" id="FO080808">
    <property type="protein sequence ID" value="CCD66940.1"/>
    <property type="molecule type" value="Genomic_DNA"/>
</dbReference>
<dbReference type="EMBL" id="FO080808">
    <property type="protein sequence ID" value="CCD66941.1"/>
    <property type="molecule type" value="Genomic_DNA"/>
</dbReference>
<dbReference type="PIR" id="T34401">
    <property type="entry name" value="T34401"/>
</dbReference>
<dbReference type="RefSeq" id="NP_001334195.1">
    <property type="nucleotide sequence ID" value="NM_001347267.1"/>
</dbReference>
<dbReference type="RefSeq" id="NP_001370553.1">
    <molecule id="Q22918-1"/>
    <property type="nucleotide sequence ID" value="NM_001383347.2"/>
</dbReference>
<dbReference type="RefSeq" id="NP_741572.1">
    <property type="nucleotide sequence ID" value="NM_171488.4"/>
</dbReference>
<dbReference type="SMR" id="Q22918"/>
<dbReference type="BioGRID" id="44208">
    <property type="interactions" value="8"/>
</dbReference>
<dbReference type="FunCoup" id="Q22918">
    <property type="interactions" value="3230"/>
</dbReference>
<dbReference type="STRING" id="6239.C37C3.2.1"/>
<dbReference type="iPTMnet" id="Q22918"/>
<dbReference type="PaxDb" id="6239-C37C3.2a.1"/>
<dbReference type="PeptideAtlas" id="Q22918"/>
<dbReference type="EnsemblMetazoa" id="C37C3.18a.1">
    <property type="protein sequence ID" value="C37C3.18a.1"/>
    <property type="gene ID" value="WBGene00303000"/>
</dbReference>
<dbReference type="EnsemblMetazoa" id="C37C3.2.1">
    <molecule id="Q22918-1"/>
    <property type="protein sequence ID" value="C37C3.2.1"/>
    <property type="gene ID" value="WBGene00016496"/>
</dbReference>
<dbReference type="GeneID" id="179165"/>
<dbReference type="UCSC" id="C37C3.2b.3">
    <molecule id="Q22918-1"/>
    <property type="organism name" value="c. elegans"/>
</dbReference>
<dbReference type="AGR" id="WB:WBGene00016496"/>
<dbReference type="AGR" id="WB:WBGene00303000"/>
<dbReference type="WormBase" id="C37C3.2a">
    <molecule id="Q22918-1"/>
    <property type="protein sequence ID" value="CE27367"/>
    <property type="gene ID" value="WBGene00016496"/>
</dbReference>
<dbReference type="WormBase" id="C37C3.2b">
    <property type="protein sequence ID" value="CE51823"/>
    <property type="gene ID" value="WBGene00016496"/>
</dbReference>
<dbReference type="eggNOG" id="KOG2767">
    <property type="taxonomic scope" value="Eukaryota"/>
</dbReference>
<dbReference type="GeneTree" id="ENSGT00390000016478"/>
<dbReference type="InParanoid" id="Q22918"/>
<dbReference type="OMA" id="YRYKMEK"/>
<dbReference type="OrthoDB" id="10250831at2759"/>
<dbReference type="PhylomeDB" id="Q22918"/>
<dbReference type="Reactome" id="R-CEL-72702">
    <property type="pathway name" value="Ribosomal scanning and start codon recognition"/>
</dbReference>
<dbReference type="PRO" id="PR:Q22918"/>
<dbReference type="Proteomes" id="UP000001940">
    <property type="component" value="Chromosome V"/>
</dbReference>
<dbReference type="Bgee" id="WBGene00016496">
    <property type="expression patterns" value="Expressed in pharyngeal muscle cell (C elegans) and 4 other cell types or tissues"/>
</dbReference>
<dbReference type="ExpressionAtlas" id="Q22918">
    <property type="expression patterns" value="baseline and differential"/>
</dbReference>
<dbReference type="GO" id="GO:0005829">
    <property type="term" value="C:cytosol"/>
    <property type="evidence" value="ECO:0000318"/>
    <property type="project" value="GO_Central"/>
</dbReference>
<dbReference type="GO" id="GO:0071074">
    <property type="term" value="F:eukaryotic initiation factor eIF2 binding"/>
    <property type="evidence" value="ECO:0000318"/>
    <property type="project" value="GO_Central"/>
</dbReference>
<dbReference type="GO" id="GO:0005092">
    <property type="term" value="F:GDP-dissociation inhibitor activity"/>
    <property type="evidence" value="ECO:0000318"/>
    <property type="project" value="GO_Central"/>
</dbReference>
<dbReference type="GO" id="GO:0005525">
    <property type="term" value="F:GTP binding"/>
    <property type="evidence" value="ECO:0007669"/>
    <property type="project" value="UniProtKB-KW"/>
</dbReference>
<dbReference type="GO" id="GO:0003743">
    <property type="term" value="F:translation initiation factor activity"/>
    <property type="evidence" value="ECO:0000318"/>
    <property type="project" value="GO_Central"/>
</dbReference>
<dbReference type="GO" id="GO:0001732">
    <property type="term" value="P:formation of cytoplasmic translation initiation complex"/>
    <property type="evidence" value="ECO:0000318"/>
    <property type="project" value="GO_Central"/>
</dbReference>
<dbReference type="GO" id="GO:0006412">
    <property type="term" value="P:translation"/>
    <property type="evidence" value="ECO:0000315"/>
    <property type="project" value="UniProtKB"/>
</dbReference>
<dbReference type="CDD" id="cd11561">
    <property type="entry name" value="W2_eIF5"/>
    <property type="match status" value="1"/>
</dbReference>
<dbReference type="FunFam" id="1.25.40.180:FF:000091">
    <property type="entry name" value="Eukaryotic translation initiation factor 5"/>
    <property type="match status" value="1"/>
</dbReference>
<dbReference type="FunFam" id="2.20.25.350:FF:000001">
    <property type="entry name" value="Eukaryotic translation initiation factor 5"/>
    <property type="match status" value="1"/>
</dbReference>
<dbReference type="FunFam" id="3.30.30.170:FF:000002">
    <property type="entry name" value="Eukaryotic translation initiation factor 5"/>
    <property type="match status" value="1"/>
</dbReference>
<dbReference type="Gene3D" id="1.25.40.180">
    <property type="match status" value="1"/>
</dbReference>
<dbReference type="Gene3D" id="2.20.25.350">
    <property type="match status" value="1"/>
</dbReference>
<dbReference type="Gene3D" id="3.30.30.170">
    <property type="match status" value="1"/>
</dbReference>
<dbReference type="InterPro" id="IPR016024">
    <property type="entry name" value="ARM-type_fold"/>
</dbReference>
<dbReference type="InterPro" id="IPR045196">
    <property type="entry name" value="IF2/IF5"/>
</dbReference>
<dbReference type="InterPro" id="IPR002735">
    <property type="entry name" value="Transl_init_fac_IF2/IF5_dom"/>
</dbReference>
<dbReference type="InterPro" id="IPR016189">
    <property type="entry name" value="Transl_init_fac_IF2/IF5_N"/>
</dbReference>
<dbReference type="InterPro" id="IPR016190">
    <property type="entry name" value="Transl_init_fac_IF2/IF5_Zn-bd"/>
</dbReference>
<dbReference type="InterPro" id="IPR003307">
    <property type="entry name" value="W2_domain"/>
</dbReference>
<dbReference type="PANTHER" id="PTHR23001">
    <property type="entry name" value="EUKARYOTIC TRANSLATION INITIATION FACTOR"/>
    <property type="match status" value="1"/>
</dbReference>
<dbReference type="PANTHER" id="PTHR23001:SF7">
    <property type="entry name" value="EUKARYOTIC TRANSLATION INITIATION FACTOR 5"/>
    <property type="match status" value="1"/>
</dbReference>
<dbReference type="Pfam" id="PF01873">
    <property type="entry name" value="eIF-5_eIF-2B"/>
    <property type="match status" value="1"/>
</dbReference>
<dbReference type="Pfam" id="PF02020">
    <property type="entry name" value="W2"/>
    <property type="match status" value="1"/>
</dbReference>
<dbReference type="SMART" id="SM00653">
    <property type="entry name" value="eIF2B_5"/>
    <property type="match status" value="1"/>
</dbReference>
<dbReference type="SMART" id="SM00515">
    <property type="entry name" value="eIF5C"/>
    <property type="match status" value="1"/>
</dbReference>
<dbReference type="SUPFAM" id="SSF48371">
    <property type="entry name" value="ARM repeat"/>
    <property type="match status" value="1"/>
</dbReference>
<dbReference type="SUPFAM" id="SSF100966">
    <property type="entry name" value="Translation initiation factor 2 beta, aIF2beta, N-terminal domain"/>
    <property type="match status" value="1"/>
</dbReference>
<dbReference type="SUPFAM" id="SSF75689">
    <property type="entry name" value="Zinc-binding domain of translation initiation factor 2 beta"/>
    <property type="match status" value="1"/>
</dbReference>
<dbReference type="PROSITE" id="PS51363">
    <property type="entry name" value="W2"/>
    <property type="match status" value="1"/>
</dbReference>
<proteinExistence type="inferred from homology"/>
<organism>
    <name type="scientific">Caenorhabditis elegans</name>
    <dbReference type="NCBI Taxonomy" id="6239"/>
    <lineage>
        <taxon>Eukaryota</taxon>
        <taxon>Metazoa</taxon>
        <taxon>Ecdysozoa</taxon>
        <taxon>Nematoda</taxon>
        <taxon>Chromadorea</taxon>
        <taxon>Rhabditida</taxon>
        <taxon>Rhabditina</taxon>
        <taxon>Rhabditomorpha</taxon>
        <taxon>Rhabditoidea</taxon>
        <taxon>Rhabditidae</taxon>
        <taxon>Peloderinae</taxon>
        <taxon>Caenorhabditis</taxon>
    </lineage>
</organism>
<sequence>MALNVNRAVADPFYRYKMPKLSAKVEGKGNGIKTVISNMSEIAKALERPPMYPTKYFGCELGAQTNFDAKNERYIVNGEHDANKLQDILDGFIKKFVLCKSCENPETQLFVRKNNIKSKCKACGCSFDIDLKHKLSTFIMKNPPKIDVDFSKAEQKNGKKTSGADAAAAVAADIIHNSDKGSSNDDDDDDWEPEPVEPNGMLSAGMGKLVLDKDLEKSEEQRLDMLHTFFLKAKEEDRISDAKGQTALRDEAERLELKQKASLLLANVFLDEKVITDKQISKHRNLLLRFTLNDKKAQRYLLGGVEQVIHKHEAELLSKSAHIIKSLYDEDVCEEDSLISWGEKPSSKYVSKSFAKKIIENSQPVLNWLKEAEEETEEESDDEIAFGGDVKESEFLRQQKEKAAREAQQKSAKATNGNAAAASGANDEEDLDIDDI</sequence>
<name>IF5_CAEEL</name>